<name>PDXA_METPB</name>
<sequence length="349" mass="36690">MASDDRPLALTLGDPSGIGPEIALAAWRLRGERGVPPFQLIGDPEFLEATAYRLGLSVPVAEVEPDDAVEVFARALPVLPLPSGAKVSATPGAPDSANAGAIVESITAAVDLVRSGAASAVVTNPIAKFVLTRVGFAHPGHTEFLAALAAREGREPPLPVMMLWSELLAVVPVTIHVALRRVPDLLTQELVERTARIVHADLRARFGLEAPRLVLSGLNPHAGESGTMGTEDRDVLAPAVAALRAEGIDIRGPLPADTLFHERARATYDVALAPTHDQALIPIKTLAFDEGVNVTLGLPFVRTSPDHGTAFDIAGKGVAKPDSLIAALRLAQRLAQRPANNVTPFPVRA</sequence>
<protein>
    <recommendedName>
        <fullName evidence="1">4-hydroxythreonine-4-phosphate dehydrogenase</fullName>
        <ecNumber evidence="1">1.1.1.262</ecNumber>
    </recommendedName>
    <alternativeName>
        <fullName evidence="1">4-(phosphohydroxy)-L-threonine dehydrogenase</fullName>
    </alternativeName>
</protein>
<reference key="1">
    <citation type="submission" date="2008-04" db="EMBL/GenBank/DDBJ databases">
        <title>Complete sequence of chromosome of Methylobacterium populi BJ001.</title>
        <authorList>
            <consortium name="US DOE Joint Genome Institute"/>
            <person name="Copeland A."/>
            <person name="Lucas S."/>
            <person name="Lapidus A."/>
            <person name="Glavina del Rio T."/>
            <person name="Dalin E."/>
            <person name="Tice H."/>
            <person name="Bruce D."/>
            <person name="Goodwin L."/>
            <person name="Pitluck S."/>
            <person name="Chertkov O."/>
            <person name="Brettin T."/>
            <person name="Detter J.C."/>
            <person name="Han C."/>
            <person name="Kuske C.R."/>
            <person name="Schmutz J."/>
            <person name="Larimer F."/>
            <person name="Land M."/>
            <person name="Hauser L."/>
            <person name="Kyrpides N."/>
            <person name="Mikhailova N."/>
            <person name="Marx C."/>
            <person name="Richardson P."/>
        </authorList>
    </citation>
    <scope>NUCLEOTIDE SEQUENCE [LARGE SCALE GENOMIC DNA]</scope>
    <source>
        <strain>ATCC BAA-705 / NCIMB 13946 / BJ001</strain>
    </source>
</reference>
<gene>
    <name evidence="1" type="primary">pdxA</name>
    <name type="ordered locus">Mpop_3923</name>
</gene>
<evidence type="ECO:0000255" key="1">
    <source>
        <dbReference type="HAMAP-Rule" id="MF_00536"/>
    </source>
</evidence>
<organism>
    <name type="scientific">Methylorubrum populi (strain ATCC BAA-705 / NCIMB 13946 / BJ001)</name>
    <name type="common">Methylobacterium populi</name>
    <dbReference type="NCBI Taxonomy" id="441620"/>
    <lineage>
        <taxon>Bacteria</taxon>
        <taxon>Pseudomonadati</taxon>
        <taxon>Pseudomonadota</taxon>
        <taxon>Alphaproteobacteria</taxon>
        <taxon>Hyphomicrobiales</taxon>
        <taxon>Methylobacteriaceae</taxon>
        <taxon>Methylorubrum</taxon>
    </lineage>
</organism>
<feature type="chain" id="PRO_1000128255" description="4-hydroxythreonine-4-phosphate dehydrogenase">
    <location>
        <begin position="1"/>
        <end position="349"/>
    </location>
</feature>
<feature type="binding site" evidence="1">
    <location>
        <position position="141"/>
    </location>
    <ligand>
        <name>substrate</name>
    </ligand>
</feature>
<feature type="binding site" evidence="1">
    <location>
        <position position="142"/>
    </location>
    <ligand>
        <name>substrate</name>
    </ligand>
</feature>
<feature type="binding site" evidence="1">
    <location>
        <position position="176"/>
    </location>
    <ligand>
        <name>a divalent metal cation</name>
        <dbReference type="ChEBI" id="CHEBI:60240"/>
        <note>ligand shared between dimeric partners</note>
    </ligand>
</feature>
<feature type="binding site" evidence="1">
    <location>
        <position position="221"/>
    </location>
    <ligand>
        <name>a divalent metal cation</name>
        <dbReference type="ChEBI" id="CHEBI:60240"/>
        <note>ligand shared between dimeric partners</note>
    </ligand>
</feature>
<feature type="binding site" evidence="1">
    <location>
        <position position="276"/>
    </location>
    <ligand>
        <name>a divalent metal cation</name>
        <dbReference type="ChEBI" id="CHEBI:60240"/>
        <note>ligand shared between dimeric partners</note>
    </ligand>
</feature>
<feature type="binding site" evidence="1">
    <location>
        <position position="284"/>
    </location>
    <ligand>
        <name>substrate</name>
    </ligand>
</feature>
<feature type="binding site" evidence="1">
    <location>
        <position position="293"/>
    </location>
    <ligand>
        <name>substrate</name>
    </ligand>
</feature>
<feature type="binding site" evidence="1">
    <location>
        <position position="302"/>
    </location>
    <ligand>
        <name>substrate</name>
    </ligand>
</feature>
<proteinExistence type="inferred from homology"/>
<keyword id="KW-0170">Cobalt</keyword>
<keyword id="KW-0963">Cytoplasm</keyword>
<keyword id="KW-0460">Magnesium</keyword>
<keyword id="KW-0479">Metal-binding</keyword>
<keyword id="KW-0520">NAD</keyword>
<keyword id="KW-0521">NADP</keyword>
<keyword id="KW-0560">Oxidoreductase</keyword>
<keyword id="KW-0664">Pyridoxine biosynthesis</keyword>
<keyword id="KW-0862">Zinc</keyword>
<accession>B1ZAJ4</accession>
<comment type="function">
    <text evidence="1">Catalyzes the NAD(P)-dependent oxidation of 4-(phosphooxy)-L-threonine (HTP) into 2-amino-3-oxo-4-(phosphooxy)butyric acid which spontaneously decarboxylates to form 3-amino-2-oxopropyl phosphate (AHAP).</text>
</comment>
<comment type="catalytic activity">
    <reaction evidence="1">
        <text>4-(phosphooxy)-L-threonine + NAD(+) = 3-amino-2-oxopropyl phosphate + CO2 + NADH</text>
        <dbReference type="Rhea" id="RHEA:32275"/>
        <dbReference type="ChEBI" id="CHEBI:16526"/>
        <dbReference type="ChEBI" id="CHEBI:57279"/>
        <dbReference type="ChEBI" id="CHEBI:57540"/>
        <dbReference type="ChEBI" id="CHEBI:57945"/>
        <dbReference type="ChEBI" id="CHEBI:58452"/>
        <dbReference type="EC" id="1.1.1.262"/>
    </reaction>
</comment>
<comment type="cofactor">
    <cofactor evidence="1">
        <name>Zn(2+)</name>
        <dbReference type="ChEBI" id="CHEBI:29105"/>
    </cofactor>
    <cofactor evidence="1">
        <name>Mg(2+)</name>
        <dbReference type="ChEBI" id="CHEBI:18420"/>
    </cofactor>
    <cofactor evidence="1">
        <name>Co(2+)</name>
        <dbReference type="ChEBI" id="CHEBI:48828"/>
    </cofactor>
    <text evidence="1">Binds 1 divalent metal cation per subunit. Can use ions such as Zn(2+), Mg(2+) or Co(2+).</text>
</comment>
<comment type="pathway">
    <text evidence="1">Cofactor biosynthesis; pyridoxine 5'-phosphate biosynthesis; pyridoxine 5'-phosphate from D-erythrose 4-phosphate: step 4/5.</text>
</comment>
<comment type="subunit">
    <text evidence="1">Homodimer.</text>
</comment>
<comment type="subcellular location">
    <subcellularLocation>
        <location evidence="1">Cytoplasm</location>
    </subcellularLocation>
</comment>
<comment type="miscellaneous">
    <text evidence="1">The active site is located at the dimer interface.</text>
</comment>
<comment type="similarity">
    <text evidence="1">Belongs to the PdxA family.</text>
</comment>
<dbReference type="EC" id="1.1.1.262" evidence="1"/>
<dbReference type="EMBL" id="CP001029">
    <property type="protein sequence ID" value="ACB82050.1"/>
    <property type="molecule type" value="Genomic_DNA"/>
</dbReference>
<dbReference type="RefSeq" id="WP_012455753.1">
    <property type="nucleotide sequence ID" value="NC_010725.1"/>
</dbReference>
<dbReference type="SMR" id="B1ZAJ4"/>
<dbReference type="STRING" id="441620.Mpop_3923"/>
<dbReference type="KEGG" id="mpo:Mpop_3923"/>
<dbReference type="eggNOG" id="COG1995">
    <property type="taxonomic scope" value="Bacteria"/>
</dbReference>
<dbReference type="HOGENOM" id="CLU_040168_1_0_5"/>
<dbReference type="OrthoDB" id="9801783at2"/>
<dbReference type="UniPathway" id="UPA00244">
    <property type="reaction ID" value="UER00312"/>
</dbReference>
<dbReference type="Proteomes" id="UP000007136">
    <property type="component" value="Chromosome"/>
</dbReference>
<dbReference type="GO" id="GO:0005737">
    <property type="term" value="C:cytoplasm"/>
    <property type="evidence" value="ECO:0007669"/>
    <property type="project" value="UniProtKB-SubCell"/>
</dbReference>
<dbReference type="GO" id="GO:0050570">
    <property type="term" value="F:4-hydroxythreonine-4-phosphate dehydrogenase activity"/>
    <property type="evidence" value="ECO:0007669"/>
    <property type="project" value="UniProtKB-UniRule"/>
</dbReference>
<dbReference type="GO" id="GO:0050897">
    <property type="term" value="F:cobalt ion binding"/>
    <property type="evidence" value="ECO:0007669"/>
    <property type="project" value="UniProtKB-UniRule"/>
</dbReference>
<dbReference type="GO" id="GO:0000287">
    <property type="term" value="F:magnesium ion binding"/>
    <property type="evidence" value="ECO:0007669"/>
    <property type="project" value="UniProtKB-UniRule"/>
</dbReference>
<dbReference type="GO" id="GO:0051287">
    <property type="term" value="F:NAD binding"/>
    <property type="evidence" value="ECO:0007669"/>
    <property type="project" value="InterPro"/>
</dbReference>
<dbReference type="GO" id="GO:0008270">
    <property type="term" value="F:zinc ion binding"/>
    <property type="evidence" value="ECO:0007669"/>
    <property type="project" value="UniProtKB-UniRule"/>
</dbReference>
<dbReference type="GO" id="GO:0042823">
    <property type="term" value="P:pyridoxal phosphate biosynthetic process"/>
    <property type="evidence" value="ECO:0007669"/>
    <property type="project" value="UniProtKB-UniRule"/>
</dbReference>
<dbReference type="GO" id="GO:0008615">
    <property type="term" value="P:pyridoxine biosynthetic process"/>
    <property type="evidence" value="ECO:0007669"/>
    <property type="project" value="UniProtKB-UniRule"/>
</dbReference>
<dbReference type="Gene3D" id="3.40.718.10">
    <property type="entry name" value="Isopropylmalate Dehydrogenase"/>
    <property type="match status" value="1"/>
</dbReference>
<dbReference type="HAMAP" id="MF_00536">
    <property type="entry name" value="PdxA"/>
    <property type="match status" value="1"/>
</dbReference>
<dbReference type="InterPro" id="IPR037510">
    <property type="entry name" value="PdxA"/>
</dbReference>
<dbReference type="InterPro" id="IPR005255">
    <property type="entry name" value="PdxA_fam"/>
</dbReference>
<dbReference type="NCBIfam" id="TIGR00557">
    <property type="entry name" value="pdxA"/>
    <property type="match status" value="1"/>
</dbReference>
<dbReference type="NCBIfam" id="NF003699">
    <property type="entry name" value="PRK05312.1"/>
    <property type="match status" value="1"/>
</dbReference>
<dbReference type="PANTHER" id="PTHR30004">
    <property type="entry name" value="4-HYDROXYTHREONINE-4-PHOSPHATE DEHYDROGENASE"/>
    <property type="match status" value="1"/>
</dbReference>
<dbReference type="PANTHER" id="PTHR30004:SF6">
    <property type="entry name" value="D-THREONATE 4-PHOSPHATE DEHYDROGENASE"/>
    <property type="match status" value="1"/>
</dbReference>
<dbReference type="Pfam" id="PF04166">
    <property type="entry name" value="PdxA"/>
    <property type="match status" value="1"/>
</dbReference>
<dbReference type="SUPFAM" id="SSF53659">
    <property type="entry name" value="Isocitrate/Isopropylmalate dehydrogenase-like"/>
    <property type="match status" value="1"/>
</dbReference>